<reference key="1">
    <citation type="journal article" date="1993" name="J. Gen. Virol.">
        <title>Nucleotide sequence evidence for the occurrence of three distinct whitefly-transmitted geminiviruses in cassava.</title>
        <authorList>
            <person name="Hong Y.G."/>
            <person name="Robinson D.J."/>
            <person name="Harrison B.D."/>
        </authorList>
    </citation>
    <scope>NUCLEOTIDE SEQUENCE [GENOMIC DNA]</scope>
</reference>
<accession>Q08590</accession>
<name>REN_ICMV</name>
<evidence type="ECO:0000250" key="1"/>
<evidence type="ECO:0000305" key="2"/>
<organismHost>
    <name type="scientific">Manihot esculenta</name>
    <name type="common">Cassava</name>
    <name type="synonym">Jatropha manihot</name>
    <dbReference type="NCBI Taxonomy" id="3983"/>
</organismHost>
<protein>
    <recommendedName>
        <fullName>Replication enhancer protein</fullName>
        <shortName>REn</shortName>
    </recommendedName>
    <alternativeName>
        <fullName>Protein AC3</fullName>
    </alternativeName>
    <alternativeName>
        <fullName>Protein AL3</fullName>
    </alternativeName>
</protein>
<dbReference type="EMBL" id="Z24758">
    <property type="protein sequence ID" value="CAA80888.1"/>
    <property type="molecule type" value="Genomic_DNA"/>
</dbReference>
<dbReference type="PIR" id="JQ2329">
    <property type="entry name" value="JQ2329"/>
</dbReference>
<dbReference type="RefSeq" id="NP_047231.1">
    <property type="nucleotide sequence ID" value="NC_001932.1"/>
</dbReference>
<dbReference type="KEGG" id="vg:991058"/>
<dbReference type="OrthoDB" id="13855at10239"/>
<dbReference type="Proteomes" id="UP000007210">
    <property type="component" value="Genome"/>
</dbReference>
<dbReference type="GO" id="GO:0016032">
    <property type="term" value="P:viral process"/>
    <property type="evidence" value="ECO:0007669"/>
    <property type="project" value="InterPro"/>
</dbReference>
<dbReference type="InterPro" id="IPR000657">
    <property type="entry name" value="Gemini_AL3"/>
</dbReference>
<dbReference type="Pfam" id="PF01407">
    <property type="entry name" value="Gemini_AL3"/>
    <property type="match status" value="1"/>
</dbReference>
<dbReference type="PRINTS" id="PR00231">
    <property type="entry name" value="GEMCOATAL3"/>
</dbReference>
<gene>
    <name type="ORF">AC3</name>
    <name type="ORF">AL3</name>
</gene>
<comment type="function">
    <text evidence="1">Increases viral DNA accumulation. Enhances infectivity and symptom expression (By similarity).</text>
</comment>
<comment type="subunit">
    <text evidence="1">Homooligomer. Interacts with the replication-associated protein (REP). Interacts with host proliferating cell nuclear antigen (PCNA). Interacts with host retinoblastoma-related protein 1 (RBR1), and may thereby deregulate the host cell cycle. Oligomerization and interaction with PCNA are necessary for optimal replication enhancement (By similarity).</text>
</comment>
<comment type="similarity">
    <text evidence="2">Belongs to the geminiviridae replication enhancer protein family.</text>
</comment>
<sequence>MDSRTGELITAAQAMNGVFIWEVPNPLYFKIIQHDNRPFVMNQDIITVQIRFNHNLRKALGLHQCWMDFKVWTTLQPQTWRFLRVFKTQVLKYLDSLGVISINTIVKAVEHVLYNVIHGTDRVEQSNLIKLNIY</sequence>
<feature type="chain" id="PRO_0000222241" description="Replication enhancer protein">
    <location>
        <begin position="1"/>
        <end position="134"/>
    </location>
</feature>
<keyword id="KW-0945">Host-virus interaction</keyword>
<proteinExistence type="inferred from homology"/>
<organism>
    <name type="scientific">Indian cassava mosaic virus</name>
    <name type="common">ICMV</name>
    <dbReference type="NCBI Taxonomy" id="31600"/>
    <lineage>
        <taxon>Viruses</taxon>
        <taxon>Monodnaviria</taxon>
        <taxon>Shotokuvirae</taxon>
        <taxon>Cressdnaviricota</taxon>
        <taxon>Repensiviricetes</taxon>
        <taxon>Geplafuvirales</taxon>
        <taxon>Geminiviridae</taxon>
        <taxon>Begomovirus</taxon>
    </lineage>
</organism>